<comment type="function">
    <text evidence="1">Produces ATP from ADP in the presence of a proton gradient across the membrane.</text>
</comment>
<comment type="subunit">
    <text evidence="1">F-type ATPases have 2 components, CF(1) - the catalytic core - and CF(0) - the membrane proton channel. CF(1) has five subunits: alpha(3), beta(3), gamma(1), delta(1), epsilon(1). CF(0) has three main subunits: a, b and c.</text>
</comment>
<comment type="subcellular location">
    <subcellularLocation>
        <location evidence="1">Cell inner membrane</location>
        <topology evidence="1">Peripheral membrane protein</topology>
    </subcellularLocation>
</comment>
<comment type="similarity">
    <text evidence="1">Belongs to the ATPase epsilon chain family.</text>
</comment>
<reference key="1">
    <citation type="submission" date="2009-03" db="EMBL/GenBank/DDBJ databases">
        <title>Brucella melitensis ATCC 23457 whole genome shotgun sequencing project.</title>
        <authorList>
            <person name="Setubal J.C."/>
            <person name="Boyle S."/>
            <person name="Crasta O.R."/>
            <person name="Gillespie J.J."/>
            <person name="Kenyon R.W."/>
            <person name="Lu J."/>
            <person name="Mane S."/>
            <person name="Nagrani S."/>
            <person name="Shallom J.M."/>
            <person name="Shallom S."/>
            <person name="Shukla M."/>
            <person name="Snyder E.E."/>
            <person name="Sobral B.W."/>
            <person name="Wattam A.R."/>
            <person name="Will R."/>
            <person name="Williams K."/>
            <person name="Yoo H."/>
            <person name="Munk C."/>
            <person name="Tapia R."/>
            <person name="Han C."/>
            <person name="Detter J.C."/>
            <person name="Bruce D."/>
            <person name="Brettin T.S."/>
        </authorList>
    </citation>
    <scope>NUCLEOTIDE SEQUENCE [LARGE SCALE GENOMIC DNA]</scope>
    <source>
        <strain>ATCC 23457</strain>
    </source>
</reference>
<protein>
    <recommendedName>
        <fullName evidence="1">ATP synthase epsilon chain</fullName>
    </recommendedName>
    <alternativeName>
        <fullName evidence="1">ATP synthase F1 sector epsilon subunit</fullName>
    </alternativeName>
    <alternativeName>
        <fullName evidence="1">F-ATPase epsilon subunit</fullName>
    </alternativeName>
</protein>
<organism>
    <name type="scientific">Brucella melitensis biotype 2 (strain ATCC 23457)</name>
    <dbReference type="NCBI Taxonomy" id="546272"/>
    <lineage>
        <taxon>Bacteria</taxon>
        <taxon>Pseudomonadati</taxon>
        <taxon>Pseudomonadota</taxon>
        <taxon>Alphaproteobacteria</taxon>
        <taxon>Hyphomicrobiales</taxon>
        <taxon>Brucellaceae</taxon>
        <taxon>Brucella/Ochrobactrum group</taxon>
        <taxon>Brucella</taxon>
    </lineage>
</organism>
<gene>
    <name evidence="1" type="primary">atpC</name>
    <name type="ordered locus">BMEA_A1847</name>
</gene>
<accession>C0RF49</accession>
<feature type="chain" id="PRO_1000146312" description="ATP synthase epsilon chain">
    <location>
        <begin position="1"/>
        <end position="135"/>
    </location>
</feature>
<evidence type="ECO:0000255" key="1">
    <source>
        <dbReference type="HAMAP-Rule" id="MF_00530"/>
    </source>
</evidence>
<sequence length="135" mass="14482">MAQAFQFELVSPERLLLSAQVTEVVIPGSEGYLTALAGHSPLMTTIMPGVVSVKLADGKTDSYVVFGGFADITPQGCTVLAESATHVDDIDPADIQHRIDHARKVLEDASSNEHRTKAEIFLHQLMTLQGAILPA</sequence>
<keyword id="KW-0066">ATP synthesis</keyword>
<keyword id="KW-0997">Cell inner membrane</keyword>
<keyword id="KW-1003">Cell membrane</keyword>
<keyword id="KW-0139">CF(1)</keyword>
<keyword id="KW-0375">Hydrogen ion transport</keyword>
<keyword id="KW-0406">Ion transport</keyword>
<keyword id="KW-0472">Membrane</keyword>
<keyword id="KW-0813">Transport</keyword>
<proteinExistence type="inferred from homology"/>
<name>ATPE_BRUMB</name>
<dbReference type="EMBL" id="CP001488">
    <property type="protein sequence ID" value="ACO01521.1"/>
    <property type="molecule type" value="Genomic_DNA"/>
</dbReference>
<dbReference type="RefSeq" id="WP_002964875.1">
    <property type="nucleotide sequence ID" value="NC_012441.1"/>
</dbReference>
<dbReference type="SMR" id="C0RF49"/>
<dbReference type="KEGG" id="bmi:BMEA_A1847"/>
<dbReference type="HOGENOM" id="CLU_084338_2_1_5"/>
<dbReference type="Proteomes" id="UP000001748">
    <property type="component" value="Chromosome I"/>
</dbReference>
<dbReference type="GO" id="GO:0005886">
    <property type="term" value="C:plasma membrane"/>
    <property type="evidence" value="ECO:0007669"/>
    <property type="project" value="UniProtKB-SubCell"/>
</dbReference>
<dbReference type="GO" id="GO:0045259">
    <property type="term" value="C:proton-transporting ATP synthase complex"/>
    <property type="evidence" value="ECO:0007669"/>
    <property type="project" value="UniProtKB-KW"/>
</dbReference>
<dbReference type="GO" id="GO:0005524">
    <property type="term" value="F:ATP binding"/>
    <property type="evidence" value="ECO:0007669"/>
    <property type="project" value="UniProtKB-UniRule"/>
</dbReference>
<dbReference type="GO" id="GO:0046933">
    <property type="term" value="F:proton-transporting ATP synthase activity, rotational mechanism"/>
    <property type="evidence" value="ECO:0007669"/>
    <property type="project" value="UniProtKB-UniRule"/>
</dbReference>
<dbReference type="CDD" id="cd12152">
    <property type="entry name" value="F1-ATPase_delta"/>
    <property type="match status" value="1"/>
</dbReference>
<dbReference type="Gene3D" id="2.60.15.10">
    <property type="entry name" value="F0F1 ATP synthase delta/epsilon subunit, N-terminal"/>
    <property type="match status" value="1"/>
</dbReference>
<dbReference type="HAMAP" id="MF_00530">
    <property type="entry name" value="ATP_synth_epsil_bac"/>
    <property type="match status" value="1"/>
</dbReference>
<dbReference type="InterPro" id="IPR001469">
    <property type="entry name" value="ATP_synth_F1_dsu/esu"/>
</dbReference>
<dbReference type="InterPro" id="IPR020546">
    <property type="entry name" value="ATP_synth_F1_dsu/esu_N"/>
</dbReference>
<dbReference type="InterPro" id="IPR036771">
    <property type="entry name" value="ATPsynth_dsu/esu_N"/>
</dbReference>
<dbReference type="NCBIfam" id="TIGR01216">
    <property type="entry name" value="ATP_synt_epsi"/>
    <property type="match status" value="1"/>
</dbReference>
<dbReference type="NCBIfam" id="NF001851">
    <property type="entry name" value="PRK00571.2-4"/>
    <property type="match status" value="1"/>
</dbReference>
<dbReference type="PANTHER" id="PTHR13822">
    <property type="entry name" value="ATP SYNTHASE DELTA/EPSILON CHAIN"/>
    <property type="match status" value="1"/>
</dbReference>
<dbReference type="PANTHER" id="PTHR13822:SF10">
    <property type="entry name" value="ATP SYNTHASE EPSILON CHAIN, CHLOROPLASTIC"/>
    <property type="match status" value="1"/>
</dbReference>
<dbReference type="Pfam" id="PF02823">
    <property type="entry name" value="ATP-synt_DE_N"/>
    <property type="match status" value="1"/>
</dbReference>
<dbReference type="SUPFAM" id="SSF51344">
    <property type="entry name" value="Epsilon subunit of F1F0-ATP synthase N-terminal domain"/>
    <property type="match status" value="1"/>
</dbReference>